<name>RIHC_SALEP</name>
<organism>
    <name type="scientific">Salmonella enteritidis PT4 (strain P125109)</name>
    <dbReference type="NCBI Taxonomy" id="550537"/>
    <lineage>
        <taxon>Bacteria</taxon>
        <taxon>Pseudomonadati</taxon>
        <taxon>Pseudomonadota</taxon>
        <taxon>Gammaproteobacteria</taxon>
        <taxon>Enterobacterales</taxon>
        <taxon>Enterobacteriaceae</taxon>
        <taxon>Salmonella</taxon>
    </lineage>
</organism>
<proteinExistence type="inferred from homology"/>
<accession>B5R1P1</accession>
<feature type="chain" id="PRO_1000145820" description="Non-specific ribonucleoside hydrolase RihC">
    <location>
        <begin position="1"/>
        <end position="306"/>
    </location>
</feature>
<feature type="active site" evidence="1">
    <location>
        <position position="235"/>
    </location>
</feature>
<gene>
    <name evidence="1" type="primary">rihC</name>
    <name type="ordered locus">SEN0052</name>
</gene>
<protein>
    <recommendedName>
        <fullName evidence="1">Non-specific ribonucleoside hydrolase RihC</fullName>
        <ecNumber evidence="1">3.2.-.-</ecNumber>
    </recommendedName>
    <alternativeName>
        <fullName evidence="1">Purine/pyrimidine ribonucleoside hydrolase</fullName>
    </alternativeName>
</protein>
<dbReference type="EC" id="3.2.-.-" evidence="1"/>
<dbReference type="EMBL" id="AM933172">
    <property type="protein sequence ID" value="CAR31642.1"/>
    <property type="molecule type" value="Genomic_DNA"/>
</dbReference>
<dbReference type="RefSeq" id="WP_000127276.1">
    <property type="nucleotide sequence ID" value="NC_011294.1"/>
</dbReference>
<dbReference type="SMR" id="B5R1P1"/>
<dbReference type="KEGG" id="set:SEN0052"/>
<dbReference type="HOGENOM" id="CLU_036838_2_2_6"/>
<dbReference type="Proteomes" id="UP000000613">
    <property type="component" value="Chromosome"/>
</dbReference>
<dbReference type="GO" id="GO:0005829">
    <property type="term" value="C:cytosol"/>
    <property type="evidence" value="ECO:0007669"/>
    <property type="project" value="TreeGrafter"/>
</dbReference>
<dbReference type="GO" id="GO:0008477">
    <property type="term" value="F:purine nucleosidase activity"/>
    <property type="evidence" value="ECO:0007669"/>
    <property type="project" value="TreeGrafter"/>
</dbReference>
<dbReference type="GO" id="GO:0006144">
    <property type="term" value="P:purine nucleobase metabolic process"/>
    <property type="evidence" value="ECO:0007669"/>
    <property type="project" value="UniProtKB-UniRule"/>
</dbReference>
<dbReference type="GO" id="GO:0006152">
    <property type="term" value="P:purine nucleoside catabolic process"/>
    <property type="evidence" value="ECO:0007669"/>
    <property type="project" value="TreeGrafter"/>
</dbReference>
<dbReference type="GO" id="GO:0006206">
    <property type="term" value="P:pyrimidine nucleobase metabolic process"/>
    <property type="evidence" value="ECO:0007669"/>
    <property type="project" value="UniProtKB-UniRule"/>
</dbReference>
<dbReference type="CDD" id="cd02651">
    <property type="entry name" value="nuc_hydro_IU_UC_XIUA"/>
    <property type="match status" value="1"/>
</dbReference>
<dbReference type="FunFam" id="3.90.245.10:FF:000002">
    <property type="entry name" value="Non-specific ribonucleoside hydrolase RihC"/>
    <property type="match status" value="1"/>
</dbReference>
<dbReference type="Gene3D" id="3.90.245.10">
    <property type="entry name" value="Ribonucleoside hydrolase-like"/>
    <property type="match status" value="1"/>
</dbReference>
<dbReference type="HAMAP" id="MF_01432">
    <property type="entry name" value="Nucleosid_hydro_RihC"/>
    <property type="match status" value="1"/>
</dbReference>
<dbReference type="InterPro" id="IPR001910">
    <property type="entry name" value="Inosine/uridine_hydrolase_dom"/>
</dbReference>
<dbReference type="InterPro" id="IPR023186">
    <property type="entry name" value="IUNH"/>
</dbReference>
<dbReference type="InterPro" id="IPR022976">
    <property type="entry name" value="Nucleosid_hydro_RihC_nonspecif"/>
</dbReference>
<dbReference type="InterPro" id="IPR036452">
    <property type="entry name" value="Ribo_hydro-like"/>
</dbReference>
<dbReference type="NCBIfam" id="NF008036">
    <property type="entry name" value="PRK10768.1"/>
    <property type="match status" value="1"/>
</dbReference>
<dbReference type="PANTHER" id="PTHR12304">
    <property type="entry name" value="INOSINE-URIDINE PREFERRING NUCLEOSIDE HYDROLASE"/>
    <property type="match status" value="1"/>
</dbReference>
<dbReference type="PANTHER" id="PTHR12304:SF15">
    <property type="entry name" value="NON-SPECIFIC RIBONUCLEOSIDE HYDROLASE RIHC"/>
    <property type="match status" value="1"/>
</dbReference>
<dbReference type="Pfam" id="PF01156">
    <property type="entry name" value="IU_nuc_hydro"/>
    <property type="match status" value="1"/>
</dbReference>
<dbReference type="SUPFAM" id="SSF53590">
    <property type="entry name" value="Nucleoside hydrolase"/>
    <property type="match status" value="1"/>
</dbReference>
<sequence>MTASLHIILDTDPGIDDAAAIAAALFAPQLDLQLITTVAGNVSVEKTTRNALQLLHFWDADVPLAQGAATPLLRPLRDAAYVHGESGMEGYDFVDHQRQPLAKPAFIAIRDVLMNAPEPMTLVAIGPLTNIALLLMHYPECACNIRRLVLMGGSAGRGNFTPNAEFNIAVDPEAAALVFRSGLEIVMCGLDVTNQAMLSPDFLNKLPALNRTGKMLHSLFNHYRSGSMRTGVRMHDLCAIAWLVRPELFTLQSCFVAVETQGEYTAGTTVVDIEGRLGQPANAQVALALDVDGFRQWVAEVFAYAP</sequence>
<reference key="1">
    <citation type="journal article" date="2008" name="Genome Res.">
        <title>Comparative genome analysis of Salmonella enteritidis PT4 and Salmonella gallinarum 287/91 provides insights into evolutionary and host adaptation pathways.</title>
        <authorList>
            <person name="Thomson N.R."/>
            <person name="Clayton D.J."/>
            <person name="Windhorst D."/>
            <person name="Vernikos G."/>
            <person name="Davidson S."/>
            <person name="Churcher C."/>
            <person name="Quail M.A."/>
            <person name="Stevens M."/>
            <person name="Jones M.A."/>
            <person name="Watson M."/>
            <person name="Barron A."/>
            <person name="Layton A."/>
            <person name="Pickard D."/>
            <person name="Kingsley R.A."/>
            <person name="Bignell A."/>
            <person name="Clark L."/>
            <person name="Harris B."/>
            <person name="Ormond D."/>
            <person name="Abdellah Z."/>
            <person name="Brooks K."/>
            <person name="Cherevach I."/>
            <person name="Chillingworth T."/>
            <person name="Woodward J."/>
            <person name="Norberczak H."/>
            <person name="Lord A."/>
            <person name="Arrowsmith C."/>
            <person name="Jagels K."/>
            <person name="Moule S."/>
            <person name="Mungall K."/>
            <person name="Saunders M."/>
            <person name="Whitehead S."/>
            <person name="Chabalgoity J.A."/>
            <person name="Maskell D."/>
            <person name="Humphreys T."/>
            <person name="Roberts M."/>
            <person name="Barrow P.A."/>
            <person name="Dougan G."/>
            <person name="Parkhill J."/>
        </authorList>
    </citation>
    <scope>NUCLEOTIDE SEQUENCE [LARGE SCALE GENOMIC DNA]</scope>
    <source>
        <strain>P125109</strain>
    </source>
</reference>
<keyword id="KW-0326">Glycosidase</keyword>
<keyword id="KW-0378">Hydrolase</keyword>
<evidence type="ECO:0000255" key="1">
    <source>
        <dbReference type="HAMAP-Rule" id="MF_01432"/>
    </source>
</evidence>
<comment type="function">
    <text evidence="1">Hydrolyzes both purine and pyrimidine ribonucleosides with a broad-substrate specificity.</text>
</comment>
<comment type="similarity">
    <text evidence="1">Belongs to the IUNH family. RihC subfamily.</text>
</comment>